<keyword id="KW-0002">3D-structure</keyword>
<keyword id="KW-0143">Chaperone</keyword>
<keyword id="KW-0963">Cytoplasm</keyword>
<keyword id="KW-1185">Reference proteome</keyword>
<keyword id="KW-0346">Stress response</keyword>
<feature type="chain" id="PRO_0000215822" description="Hsp90 co-chaperone AHA1">
    <location>
        <begin position="1"/>
        <end position="350"/>
    </location>
</feature>
<feature type="region of interest" description="Disordered" evidence="1">
    <location>
        <begin position="158"/>
        <end position="212"/>
    </location>
</feature>
<feature type="compositionally biased region" description="Polar residues" evidence="1">
    <location>
        <begin position="158"/>
        <end position="175"/>
    </location>
</feature>
<feature type="compositionally biased region" description="Low complexity" evidence="1">
    <location>
        <begin position="190"/>
        <end position="202"/>
    </location>
</feature>
<feature type="compositionally biased region" description="Polar residues" evidence="1">
    <location>
        <begin position="203"/>
        <end position="212"/>
    </location>
</feature>
<feature type="mutagenesis site" description="No effect on Hsp90 ATPase activity but reduces Hsp90 binding affinity." evidence="6">
    <original>D</original>
    <variation>A</variation>
    <location>
        <position position="53"/>
    </location>
</feature>
<feature type="mutagenesis site" description="Decreases activation of Hsp90 ATPase activity and substantially reduces Hsp90 binding affinity." evidence="6">
    <original>D</original>
    <variation>K</variation>
    <location>
        <position position="53"/>
    </location>
</feature>
<feature type="mutagenesis site" description="Decreases activation of Hsp90 ATPase activity with a small reduction in Hsp90 binding affinity." evidence="6">
    <original>R</original>
    <variation>A</variation>
    <location>
        <position position="59"/>
    </location>
</feature>
<feature type="mutagenesis site" description="Decreased activation of Hsp90 ATPase activity with a small reduction in Hsp90 binding affinity." evidence="6">
    <original>K</original>
    <variation>A</variation>
    <location>
        <position position="60"/>
    </location>
</feature>
<feature type="mutagenesis site" description="Decreased activation of Hsp90 ATPase activity with a small reduction in Hsp90 binding affinity." evidence="6">
    <original>K</original>
    <variation>A</variation>
    <location>
        <position position="62"/>
    </location>
</feature>
<feature type="sequence conflict" description="In Ref. 11." evidence="7" ref="11">
    <original>L</original>
    <variation>I</variation>
    <location>
        <position position="28"/>
    </location>
</feature>
<feature type="helix" evidence="13">
    <location>
        <begin position="6"/>
        <end position="8"/>
    </location>
</feature>
<feature type="strand" evidence="13">
    <location>
        <begin position="12"/>
        <end position="15"/>
    </location>
</feature>
<feature type="helix" evidence="8">
    <location>
        <begin position="17"/>
        <end position="28"/>
    </location>
</feature>
<feature type="strand" evidence="9">
    <location>
        <begin position="32"/>
        <end position="34"/>
    </location>
</feature>
<feature type="strand" evidence="13">
    <location>
        <begin position="36"/>
        <end position="39"/>
    </location>
</feature>
<feature type="strand" evidence="8">
    <location>
        <begin position="41"/>
        <end position="44"/>
    </location>
</feature>
<feature type="strand" evidence="8">
    <location>
        <begin position="49"/>
        <end position="53"/>
    </location>
</feature>
<feature type="strand" evidence="9">
    <location>
        <begin position="55"/>
        <end position="57"/>
    </location>
</feature>
<feature type="strand" evidence="13">
    <location>
        <begin position="63"/>
        <end position="65"/>
    </location>
</feature>
<feature type="strand" evidence="8">
    <location>
        <begin position="68"/>
        <end position="78"/>
    </location>
</feature>
<feature type="strand" evidence="9">
    <location>
        <begin position="82"/>
        <end position="85"/>
    </location>
</feature>
<feature type="strand" evidence="8">
    <location>
        <begin position="88"/>
        <end position="99"/>
    </location>
</feature>
<feature type="helix" evidence="8">
    <location>
        <begin position="104"/>
        <end position="106"/>
    </location>
</feature>
<feature type="strand" evidence="8">
    <location>
        <begin position="110"/>
        <end position="113"/>
    </location>
</feature>
<feature type="helix" evidence="13">
    <location>
        <begin position="118"/>
        <end position="122"/>
    </location>
</feature>
<feature type="helix" evidence="8">
    <location>
        <begin position="123"/>
        <end position="130"/>
    </location>
</feature>
<feature type="helix" evidence="8">
    <location>
        <begin position="132"/>
        <end position="150"/>
    </location>
</feature>
<feature type="turn" evidence="11">
    <location>
        <begin position="151"/>
        <end position="153"/>
    </location>
</feature>
<feature type="helix" evidence="13">
    <location>
        <begin position="158"/>
        <end position="160"/>
    </location>
</feature>
<feature type="helix" evidence="13">
    <location>
        <begin position="164"/>
        <end position="169"/>
    </location>
</feature>
<feature type="strand" evidence="12">
    <location>
        <begin position="213"/>
        <end position="218"/>
    </location>
</feature>
<feature type="strand" evidence="10">
    <location>
        <begin position="221"/>
        <end position="224"/>
    </location>
</feature>
<feature type="helix" evidence="12">
    <location>
        <begin position="226"/>
        <end position="232"/>
    </location>
</feature>
<feature type="helix" evidence="12">
    <location>
        <begin position="236"/>
        <end position="243"/>
    </location>
</feature>
<feature type="strand" evidence="12">
    <location>
        <begin position="246"/>
        <end position="248"/>
    </location>
</feature>
<feature type="strand" evidence="12">
    <location>
        <begin position="252"/>
        <end position="254"/>
    </location>
</feature>
<feature type="strand" evidence="12">
    <location>
        <begin position="259"/>
        <end position="263"/>
    </location>
</feature>
<feature type="turn" evidence="12">
    <location>
        <begin position="264"/>
        <end position="267"/>
    </location>
</feature>
<feature type="strand" evidence="12">
    <location>
        <begin position="268"/>
        <end position="275"/>
    </location>
</feature>
<feature type="strand" evidence="12">
    <location>
        <begin position="277"/>
        <end position="283"/>
    </location>
</feature>
<feature type="strand" evidence="12">
    <location>
        <begin position="297"/>
        <end position="305"/>
    </location>
</feature>
<feature type="turn" evidence="12">
    <location>
        <begin position="306"/>
        <end position="309"/>
    </location>
</feature>
<feature type="strand" evidence="12">
    <location>
        <begin position="310"/>
        <end position="321"/>
    </location>
</feature>
<feature type="helix" evidence="12">
    <location>
        <begin position="322"/>
        <end position="324"/>
    </location>
</feature>
<feature type="helix" evidence="12">
    <location>
        <begin position="325"/>
        <end position="330"/>
    </location>
</feature>
<feature type="helix" evidence="12">
    <location>
        <begin position="332"/>
        <end position="335"/>
    </location>
</feature>
<feature type="helix" evidence="12">
    <location>
        <begin position="338"/>
        <end position="343"/>
    </location>
</feature>
<name>AHA1_YEAST</name>
<dbReference type="EMBL" id="Z68194">
    <property type="protein sequence ID" value="CAA92357.1"/>
    <property type="molecule type" value="Genomic_DNA"/>
</dbReference>
<dbReference type="EMBL" id="Z68195">
    <property type="protein sequence ID" value="CAA92365.1"/>
    <property type="molecule type" value="Genomic_DNA"/>
</dbReference>
<dbReference type="EMBL" id="AY557694">
    <property type="protein sequence ID" value="AAS56020.1"/>
    <property type="molecule type" value="Genomic_DNA"/>
</dbReference>
<dbReference type="EMBL" id="U28414">
    <property type="protein sequence ID" value="AAA73862.1"/>
    <property type="molecule type" value="Genomic_DNA"/>
</dbReference>
<dbReference type="EMBL" id="BK006938">
    <property type="protein sequence ID" value="DAA12058.1"/>
    <property type="molecule type" value="Genomic_DNA"/>
</dbReference>
<dbReference type="PIR" id="S61581">
    <property type="entry name" value="S61581"/>
</dbReference>
<dbReference type="RefSeq" id="NP_010500.3">
    <property type="nucleotide sequence ID" value="NM_001180522.3"/>
</dbReference>
<dbReference type="PDB" id="1USU">
    <property type="method" value="X-ray"/>
    <property type="resolution" value="2.15 A"/>
    <property type="chains" value="B=1-156"/>
</dbReference>
<dbReference type="PDB" id="1USV">
    <property type="method" value="X-ray"/>
    <property type="resolution" value="2.70 A"/>
    <property type="chains" value="B/D/F/H=1-156"/>
</dbReference>
<dbReference type="PDB" id="6XLB">
    <property type="method" value="EM"/>
    <property type="resolution" value="3.80 A"/>
    <property type="chains" value="C1/D1=1-350"/>
</dbReference>
<dbReference type="PDB" id="6XLD">
    <property type="method" value="EM"/>
    <property type="resolution" value="3.66 A"/>
    <property type="chains" value="C=1-350"/>
</dbReference>
<dbReference type="PDB" id="6XLE">
    <property type="method" value="EM"/>
    <property type="resolution" value="2.74 A"/>
    <property type="chains" value="C/D=1-350"/>
</dbReference>
<dbReference type="PDB" id="6XLF">
    <property type="method" value="EM"/>
    <property type="resolution" value="3.15 A"/>
    <property type="chains" value="C/D=1-350"/>
</dbReference>
<dbReference type="PDB" id="6XLG">
    <property type="method" value="EM"/>
    <property type="resolution" value="2.71 A"/>
    <property type="chains" value="C/D=1-350"/>
</dbReference>
<dbReference type="PDB" id="6XLH">
    <property type="method" value="EM"/>
    <property type="resolution" value="2.83 A"/>
    <property type="chains" value="C/D=1-350"/>
</dbReference>
<dbReference type="PDBsum" id="1USU"/>
<dbReference type="PDBsum" id="1USV"/>
<dbReference type="PDBsum" id="6XLB"/>
<dbReference type="PDBsum" id="6XLD"/>
<dbReference type="PDBsum" id="6XLE"/>
<dbReference type="PDBsum" id="6XLF"/>
<dbReference type="PDBsum" id="6XLG"/>
<dbReference type="PDBsum" id="6XLH"/>
<dbReference type="BMRB" id="Q12449"/>
<dbReference type="EMDB" id="EMD-22238"/>
<dbReference type="EMDB" id="EMD-22240"/>
<dbReference type="EMDB" id="EMD-22241"/>
<dbReference type="EMDB" id="EMD-22242"/>
<dbReference type="EMDB" id="EMD-22243"/>
<dbReference type="EMDB" id="EMD-22244"/>
<dbReference type="SMR" id="Q12449"/>
<dbReference type="BioGRID" id="32268">
    <property type="interactions" value="175"/>
</dbReference>
<dbReference type="DIP" id="DIP-1831N"/>
<dbReference type="FunCoup" id="Q12449">
    <property type="interactions" value="1636"/>
</dbReference>
<dbReference type="IntAct" id="Q12449">
    <property type="interactions" value="72"/>
</dbReference>
<dbReference type="MINT" id="Q12449"/>
<dbReference type="STRING" id="4932.YDR214W"/>
<dbReference type="CarbonylDB" id="Q12449"/>
<dbReference type="iPTMnet" id="Q12449"/>
<dbReference type="PaxDb" id="4932-YDR214W"/>
<dbReference type="PeptideAtlas" id="Q12449"/>
<dbReference type="EnsemblFungi" id="YDR214W_mRNA">
    <property type="protein sequence ID" value="YDR214W"/>
    <property type="gene ID" value="YDR214W"/>
</dbReference>
<dbReference type="GeneID" id="851800"/>
<dbReference type="KEGG" id="sce:YDR214W"/>
<dbReference type="AGR" id="SGD:S000002622"/>
<dbReference type="SGD" id="S000002622">
    <property type="gene designation" value="AHA1"/>
</dbReference>
<dbReference type="VEuPathDB" id="FungiDB:YDR214W"/>
<dbReference type="eggNOG" id="KOG2936">
    <property type="taxonomic scope" value="Eukaryota"/>
</dbReference>
<dbReference type="GeneTree" id="ENSGT00940000173240"/>
<dbReference type="HOGENOM" id="CLU_049046_1_0_1"/>
<dbReference type="InParanoid" id="Q12449"/>
<dbReference type="OMA" id="GDCEVNQ"/>
<dbReference type="OrthoDB" id="567237at2759"/>
<dbReference type="BioCyc" id="YEAST:G3O-29796-MONOMER"/>
<dbReference type="BioGRID-ORCS" id="851800">
    <property type="hits" value="4 hits in 10 CRISPR screens"/>
</dbReference>
<dbReference type="EvolutionaryTrace" id="Q12449"/>
<dbReference type="PRO" id="PR:Q12449"/>
<dbReference type="Proteomes" id="UP000002311">
    <property type="component" value="Chromosome IV"/>
</dbReference>
<dbReference type="RNAct" id="Q12449">
    <property type="molecule type" value="protein"/>
</dbReference>
<dbReference type="GO" id="GO:0005737">
    <property type="term" value="C:cytoplasm"/>
    <property type="evidence" value="ECO:0000314"/>
    <property type="project" value="SGD"/>
</dbReference>
<dbReference type="GO" id="GO:0005829">
    <property type="term" value="C:cytosol"/>
    <property type="evidence" value="ECO:0000318"/>
    <property type="project" value="GO_Central"/>
</dbReference>
<dbReference type="GO" id="GO:0005634">
    <property type="term" value="C:nucleus"/>
    <property type="evidence" value="ECO:0000314"/>
    <property type="project" value="SGD"/>
</dbReference>
<dbReference type="GO" id="GO:0001671">
    <property type="term" value="F:ATPase activator activity"/>
    <property type="evidence" value="ECO:0000314"/>
    <property type="project" value="UniProtKB"/>
</dbReference>
<dbReference type="GO" id="GO:0051087">
    <property type="term" value="F:protein-folding chaperone binding"/>
    <property type="evidence" value="ECO:0000314"/>
    <property type="project" value="SGD"/>
</dbReference>
<dbReference type="GO" id="GO:0006457">
    <property type="term" value="P:protein folding"/>
    <property type="evidence" value="ECO:0000315"/>
    <property type="project" value="SGD"/>
</dbReference>
<dbReference type="GO" id="GO:0006606">
    <property type="term" value="P:protein import into nucleus"/>
    <property type="evidence" value="ECO:0000315"/>
    <property type="project" value="SGD"/>
</dbReference>
<dbReference type="CDD" id="cd08892">
    <property type="entry name" value="SRPBCC_Aha1"/>
    <property type="match status" value="1"/>
</dbReference>
<dbReference type="FunFam" id="3.15.10.20:FF:000004">
    <property type="entry name" value="Hsp90 co-chaperone AHA1"/>
    <property type="match status" value="1"/>
</dbReference>
<dbReference type="FunFam" id="3.30.530.20:FF:000047">
    <property type="entry name" value="Hsp90 co-chaperone AHA1"/>
    <property type="match status" value="1"/>
</dbReference>
<dbReference type="Gene3D" id="3.30.530.20">
    <property type="match status" value="1"/>
</dbReference>
<dbReference type="Gene3D" id="3.15.10.20">
    <property type="entry name" value="Activator of Hsp90 ATPase Aha1, N-terminal domain"/>
    <property type="match status" value="1"/>
</dbReference>
<dbReference type="InterPro" id="IPR036338">
    <property type="entry name" value="Aha1"/>
</dbReference>
<dbReference type="InterPro" id="IPR015310">
    <property type="entry name" value="AHSA1-like_N"/>
</dbReference>
<dbReference type="InterPro" id="IPR013538">
    <property type="entry name" value="ASHA1/2-like_C"/>
</dbReference>
<dbReference type="InterPro" id="IPR023393">
    <property type="entry name" value="START-like_dom_sf"/>
</dbReference>
<dbReference type="PANTHER" id="PTHR13009">
    <property type="entry name" value="HEAT SHOCK PROTEIN 90 HSP90 CO-CHAPERONE AHA-1"/>
    <property type="match status" value="1"/>
</dbReference>
<dbReference type="PANTHER" id="PTHR13009:SF22">
    <property type="entry name" value="LD43819P"/>
    <property type="match status" value="1"/>
</dbReference>
<dbReference type="Pfam" id="PF09229">
    <property type="entry name" value="Aha1_N"/>
    <property type="match status" value="1"/>
</dbReference>
<dbReference type="Pfam" id="PF08327">
    <property type="entry name" value="AHSA1"/>
    <property type="match status" value="1"/>
</dbReference>
<dbReference type="SMART" id="SM01000">
    <property type="entry name" value="Aha1_N"/>
    <property type="match status" value="1"/>
</dbReference>
<dbReference type="SUPFAM" id="SSF103111">
    <property type="entry name" value="Activator of Hsp90 ATPase, Aha1"/>
    <property type="match status" value="1"/>
</dbReference>
<dbReference type="SUPFAM" id="SSF55961">
    <property type="entry name" value="Bet v1-like"/>
    <property type="match status" value="1"/>
</dbReference>
<evidence type="ECO:0000256" key="1">
    <source>
        <dbReference type="SAM" id="MobiDB-lite"/>
    </source>
</evidence>
<evidence type="ECO:0000269" key="2">
    <source>
    </source>
</evidence>
<evidence type="ECO:0000269" key="3">
    <source>
    </source>
</evidence>
<evidence type="ECO:0000269" key="4">
    <source>
    </source>
</evidence>
<evidence type="ECO:0000269" key="5">
    <source>
    </source>
</evidence>
<evidence type="ECO:0000269" key="6">
    <source>
    </source>
</evidence>
<evidence type="ECO:0000305" key="7"/>
<evidence type="ECO:0007829" key="8">
    <source>
        <dbReference type="PDB" id="1USU"/>
    </source>
</evidence>
<evidence type="ECO:0007829" key="9">
    <source>
        <dbReference type="PDB" id="1USV"/>
    </source>
</evidence>
<evidence type="ECO:0007829" key="10">
    <source>
        <dbReference type="PDB" id="6XLE"/>
    </source>
</evidence>
<evidence type="ECO:0007829" key="11">
    <source>
        <dbReference type="PDB" id="6XLF"/>
    </source>
</evidence>
<evidence type="ECO:0007829" key="12">
    <source>
        <dbReference type="PDB" id="6XLG"/>
    </source>
</evidence>
<evidence type="ECO:0007829" key="13">
    <source>
        <dbReference type="PDB" id="6XLH"/>
    </source>
</evidence>
<comment type="function">
    <text evidence="2 3">Co-chaperone that binds to the molecular chaperone HSP82 and stimulates its ATPase activity. Binding to HSP82 promotes a conformational switch in the catalytic loop of HSP82, facilitating the interaction of the catalytic 'Arg-380' with ATP in the N-terminal nucleotide-binding domain. Although not essential, it confers thermotolerance when intracellular levels of HSP82 are limiting.</text>
</comment>
<comment type="subunit">
    <text evidence="2 3 6">Monomer. Interacts with HSP82.</text>
</comment>
<comment type="interaction">
    <interactant intactId="EBI-37072">
        <id>Q12449</id>
    </interactant>
    <interactant intactId="EBI-6194">
        <id>P39009</id>
        <label>DUN1</label>
    </interactant>
    <organismsDiffer>false</organismsDiffer>
    <experiments>2</experiments>
</comment>
<comment type="interaction">
    <interactant intactId="EBI-37072">
        <id>Q12449</id>
    </interactant>
    <interactant intactId="EBI-8666">
        <id>P15108</id>
        <label>HSC82</label>
    </interactant>
    <organismsDiffer>false</organismsDiffer>
    <experiments>4</experiments>
</comment>
<comment type="interaction">
    <interactant intactId="EBI-37072">
        <id>Q12449</id>
    </interactant>
    <interactant intactId="EBI-8659">
        <id>P02829</id>
        <label>HSP82</label>
    </interactant>
    <organismsDiffer>false</organismsDiffer>
    <experiments>14</experiments>
</comment>
<comment type="subcellular location">
    <subcellularLocation>
        <location evidence="4">Cytoplasm</location>
    </subcellularLocation>
</comment>
<comment type="induction">
    <text evidence="2">By heat shock.</text>
</comment>
<comment type="miscellaneous">
    <text evidence="5">Present with 13939 molecules/cell in log phase SD medium.</text>
</comment>
<comment type="similarity">
    <text evidence="7">Belongs to the AHA1 family.</text>
</comment>
<accession>Q12449</accession>
<accession>D6VSJ8</accession>
<accession>Q02565</accession>
<accession>Q7LIE3</accession>
<sequence>MVVNNPNNWHWVDKNCIGWAKEYFKQKLVGVEAGSVKDKKYAKIKSVSSIEGDCEVNQRKGKVISLFDLKITVLIEGHVDSKDGSALPFEGSINVPEVAFDSEASSYQFDISIFKETSELSEAKPLIRSELLPKLRQIFQQFGKDLLATHGNDIQVPESQVKSNYTRGNQKSSFTEIKDSASKPKKNALPSSTSTSAPVSSTNKVPQNGSGNSTSIYLEPTFNVPSSELYETFLDKQRILAWTRSAQFFNSGPKLETKEKFELFGGNVISELVSCEKDKKLVFHWKLKDWSAPFNSTIEMTFHESQEFHETKLQVKWTGIPVGEEDRVRANFEEYYVRSIKLTFGFGAVL</sequence>
<proteinExistence type="evidence at protein level"/>
<organism>
    <name type="scientific">Saccharomyces cerevisiae (strain ATCC 204508 / S288c)</name>
    <name type="common">Baker's yeast</name>
    <dbReference type="NCBI Taxonomy" id="559292"/>
    <lineage>
        <taxon>Eukaryota</taxon>
        <taxon>Fungi</taxon>
        <taxon>Dikarya</taxon>
        <taxon>Ascomycota</taxon>
        <taxon>Saccharomycotina</taxon>
        <taxon>Saccharomycetes</taxon>
        <taxon>Saccharomycetales</taxon>
        <taxon>Saccharomycetaceae</taxon>
        <taxon>Saccharomyces</taxon>
    </lineage>
</organism>
<reference key="1">
    <citation type="journal article" date="1997" name="Nature">
        <title>The nucleotide sequence of Saccharomyces cerevisiae chromosome IV.</title>
        <authorList>
            <person name="Jacq C."/>
            <person name="Alt-Moerbe J."/>
            <person name="Andre B."/>
            <person name="Arnold W."/>
            <person name="Bahr A."/>
            <person name="Ballesta J.P.G."/>
            <person name="Bargues M."/>
            <person name="Baron L."/>
            <person name="Becker A."/>
            <person name="Biteau N."/>
            <person name="Bloecker H."/>
            <person name="Blugeon C."/>
            <person name="Boskovic J."/>
            <person name="Brandt P."/>
            <person name="Brueckner M."/>
            <person name="Buitrago M.J."/>
            <person name="Coster F."/>
            <person name="Delaveau T."/>
            <person name="del Rey F."/>
            <person name="Dujon B."/>
            <person name="Eide L.G."/>
            <person name="Garcia-Cantalejo J.M."/>
            <person name="Goffeau A."/>
            <person name="Gomez-Peris A."/>
            <person name="Granotier C."/>
            <person name="Hanemann V."/>
            <person name="Hankeln T."/>
            <person name="Hoheisel J.D."/>
            <person name="Jaeger W."/>
            <person name="Jimenez A."/>
            <person name="Jonniaux J.-L."/>
            <person name="Kraemer C."/>
            <person name="Kuester H."/>
            <person name="Laamanen P."/>
            <person name="Legros Y."/>
            <person name="Louis E.J."/>
            <person name="Moeller-Rieker S."/>
            <person name="Monnet A."/>
            <person name="Moro M."/>
            <person name="Mueller-Auer S."/>
            <person name="Nussbaumer B."/>
            <person name="Paricio N."/>
            <person name="Paulin L."/>
            <person name="Perea J."/>
            <person name="Perez-Alonso M."/>
            <person name="Perez-Ortin J.E."/>
            <person name="Pohl T.M."/>
            <person name="Prydz H."/>
            <person name="Purnelle B."/>
            <person name="Rasmussen S.W."/>
            <person name="Remacha M.A."/>
            <person name="Revuelta J.L."/>
            <person name="Rieger M."/>
            <person name="Salom D."/>
            <person name="Saluz H.P."/>
            <person name="Saiz J.E."/>
            <person name="Saren A.-M."/>
            <person name="Schaefer M."/>
            <person name="Scharfe M."/>
            <person name="Schmidt E.R."/>
            <person name="Schneider C."/>
            <person name="Scholler P."/>
            <person name="Schwarz S."/>
            <person name="Soler-Mira A."/>
            <person name="Urrestarazu L.A."/>
            <person name="Verhasselt P."/>
            <person name="Vissers S."/>
            <person name="Voet M."/>
            <person name="Volckaert G."/>
            <person name="Wagner G."/>
            <person name="Wambutt R."/>
            <person name="Wedler E."/>
            <person name="Wedler H."/>
            <person name="Woelfl S."/>
            <person name="Harris D.E."/>
            <person name="Bowman S."/>
            <person name="Brown D."/>
            <person name="Churcher C.M."/>
            <person name="Connor R."/>
            <person name="Dedman K."/>
            <person name="Gentles S."/>
            <person name="Hamlin N."/>
            <person name="Hunt S."/>
            <person name="Jones L."/>
            <person name="McDonald S."/>
            <person name="Murphy L.D."/>
            <person name="Niblett D."/>
            <person name="Odell C."/>
            <person name="Oliver K."/>
            <person name="Rajandream M.A."/>
            <person name="Richards C."/>
            <person name="Shore L."/>
            <person name="Walsh S.V."/>
            <person name="Barrell B.G."/>
            <person name="Dietrich F.S."/>
            <person name="Mulligan J.T."/>
            <person name="Allen E."/>
            <person name="Araujo R."/>
            <person name="Aviles E."/>
            <person name="Berno A."/>
            <person name="Carpenter J."/>
            <person name="Chen E."/>
            <person name="Cherry J.M."/>
            <person name="Chung E."/>
            <person name="Duncan M."/>
            <person name="Hunicke-Smith S."/>
            <person name="Hyman R.W."/>
            <person name="Komp C."/>
            <person name="Lashkari D."/>
            <person name="Lew H."/>
            <person name="Lin D."/>
            <person name="Mosedale D."/>
            <person name="Nakahara K."/>
            <person name="Namath A."/>
            <person name="Oefner P."/>
            <person name="Oh C."/>
            <person name="Petel F.X."/>
            <person name="Roberts D."/>
            <person name="Schramm S."/>
            <person name="Schroeder M."/>
            <person name="Shogren T."/>
            <person name="Shroff N."/>
            <person name="Winant A."/>
            <person name="Yelton M.A."/>
            <person name="Botstein D."/>
            <person name="Davis R.W."/>
            <person name="Johnston M."/>
            <person name="Andrews S."/>
            <person name="Brinkman R."/>
            <person name="Cooper J."/>
            <person name="Ding H."/>
            <person name="Du Z."/>
            <person name="Favello A."/>
            <person name="Fulton L."/>
            <person name="Gattung S."/>
            <person name="Greco T."/>
            <person name="Hallsworth K."/>
            <person name="Hawkins J."/>
            <person name="Hillier L.W."/>
            <person name="Jier M."/>
            <person name="Johnson D."/>
            <person name="Johnston L."/>
            <person name="Kirsten J."/>
            <person name="Kucaba T."/>
            <person name="Langston Y."/>
            <person name="Latreille P."/>
            <person name="Le T."/>
            <person name="Mardis E."/>
            <person name="Menezes S."/>
            <person name="Miller N."/>
            <person name="Nhan M."/>
            <person name="Pauley A."/>
            <person name="Peluso D."/>
            <person name="Rifkin L."/>
            <person name="Riles L."/>
            <person name="Taich A."/>
            <person name="Trevaskis E."/>
            <person name="Vignati D."/>
            <person name="Wilcox L."/>
            <person name="Wohldman P."/>
            <person name="Vaudin M."/>
            <person name="Wilson R."/>
            <person name="Waterston R."/>
            <person name="Albermann K."/>
            <person name="Hani J."/>
            <person name="Heumann K."/>
            <person name="Kleine K."/>
            <person name="Mewes H.-W."/>
            <person name="Zollner A."/>
            <person name="Zaccaria P."/>
        </authorList>
    </citation>
    <scope>NUCLEOTIDE SEQUENCE [LARGE SCALE GENOMIC DNA]</scope>
    <source>
        <strain>ATCC 204508 / S288c</strain>
    </source>
</reference>
<reference key="2">
    <citation type="journal article" date="2014" name="G3 (Bethesda)">
        <title>The reference genome sequence of Saccharomyces cerevisiae: Then and now.</title>
        <authorList>
            <person name="Engel S.R."/>
            <person name="Dietrich F.S."/>
            <person name="Fisk D.G."/>
            <person name="Binkley G."/>
            <person name="Balakrishnan R."/>
            <person name="Costanzo M.C."/>
            <person name="Dwight S.S."/>
            <person name="Hitz B.C."/>
            <person name="Karra K."/>
            <person name="Nash R.S."/>
            <person name="Weng S."/>
            <person name="Wong E.D."/>
            <person name="Lloyd P."/>
            <person name="Skrzypek M.S."/>
            <person name="Miyasato S.R."/>
            <person name="Simison M."/>
            <person name="Cherry J.M."/>
        </authorList>
    </citation>
    <scope>GENOME REANNOTATION</scope>
    <source>
        <strain>ATCC 204508 / S288c</strain>
    </source>
</reference>
<reference key="3">
    <citation type="journal article" date="2007" name="Genome Res.">
        <title>Approaching a complete repository of sequence-verified protein-encoding clones for Saccharomyces cerevisiae.</title>
        <authorList>
            <person name="Hu Y."/>
            <person name="Rolfs A."/>
            <person name="Bhullar B."/>
            <person name="Murthy T.V.S."/>
            <person name="Zhu C."/>
            <person name="Berger M.F."/>
            <person name="Camargo A.A."/>
            <person name="Kelley F."/>
            <person name="McCarron S."/>
            <person name="Jepson D."/>
            <person name="Richardson A."/>
            <person name="Raphael J."/>
            <person name="Moreira D."/>
            <person name="Taycher E."/>
            <person name="Zuo D."/>
            <person name="Mohr S."/>
            <person name="Kane M.F."/>
            <person name="Williamson J."/>
            <person name="Simpson A.J.G."/>
            <person name="Bulyk M.L."/>
            <person name="Harlow E."/>
            <person name="Marsischky G."/>
            <person name="Kolodner R.D."/>
            <person name="LaBaer J."/>
        </authorList>
    </citation>
    <scope>NUCLEOTIDE SEQUENCE [GENOMIC DNA]</scope>
    <source>
        <strain>ATCC 204508 / S288c</strain>
    </source>
</reference>
<reference key="4">
    <citation type="journal article" date="1986" name="Nature">
        <title>Sequence homology of the yeast regulatory protein ADR1 with Xenopus transcription factor TFIIIA.</title>
        <authorList>
            <person name="Hartshorne T.A."/>
            <person name="Blumberg H."/>
            <person name="Young E.T."/>
        </authorList>
    </citation>
    <scope>NUCLEOTIDE SEQUENCE [GENOMIC DNA] OF 129-350</scope>
</reference>
<reference key="5">
    <citation type="journal article" date="2002" name="Mol. Cell">
        <title>Activation of the ATPase activity of hsp90 by the stress-regulated cochaperone aha1.</title>
        <authorList>
            <person name="Panaretou B."/>
            <person name="Siligardi G."/>
            <person name="Meyer P."/>
            <person name="Maloney A."/>
            <person name="Sullivan J.K."/>
            <person name="Singh S."/>
            <person name="Millson S.H."/>
            <person name="Clarke P.A."/>
            <person name="Naaby-Hansen S."/>
            <person name="Stein R."/>
            <person name="Cramer R."/>
            <person name="Mollapour M."/>
            <person name="Workman P."/>
            <person name="Piper P.W."/>
            <person name="Pearl L.H."/>
            <person name="Prodromou C."/>
        </authorList>
    </citation>
    <scope>FUNCTION</scope>
    <scope>INDUCTION</scope>
    <scope>INTERACTION WITH HSP82</scope>
</reference>
<reference key="6">
    <citation type="journal article" date="2003" name="J. Biol. Chem.">
        <title>Aha1 binds to the middle domain of Hsp90, contributes to client protein activation, and stimulates the ATPase activity of the molecular chaperone.</title>
        <authorList>
            <person name="Lotz G.P."/>
            <person name="Lin H."/>
            <person name="Harst A."/>
            <person name="Obermann W.M.J."/>
        </authorList>
    </citation>
    <scope>FUNCTION</scope>
    <scope>INTERACTION WITH HSP82</scope>
</reference>
<reference key="7">
    <citation type="journal article" date="2003" name="Nature">
        <title>Global analysis of protein localization in budding yeast.</title>
        <authorList>
            <person name="Huh W.-K."/>
            <person name="Falvo J.V."/>
            <person name="Gerke L.C."/>
            <person name="Carroll A.S."/>
            <person name="Howson R.W."/>
            <person name="Weissman J.S."/>
            <person name="O'Shea E.K."/>
        </authorList>
    </citation>
    <scope>SUBCELLULAR LOCATION [LARGE SCALE ANALYSIS]</scope>
</reference>
<reference key="8">
    <citation type="journal article" date="2003" name="Nature">
        <title>Global analysis of protein expression in yeast.</title>
        <authorList>
            <person name="Ghaemmaghami S."/>
            <person name="Huh W.-K."/>
            <person name="Bower K."/>
            <person name="Howson R.W."/>
            <person name="Belle A."/>
            <person name="Dephoure N."/>
            <person name="O'Shea E.K."/>
            <person name="Weissman J.S."/>
        </authorList>
    </citation>
    <scope>LEVEL OF PROTEIN EXPRESSION [LARGE SCALE ANALYSIS]</scope>
</reference>
<reference key="9">
    <citation type="journal article" date="2008" name="Mol. Cell. Proteomics">
        <title>A multidimensional chromatography technology for in-depth phosphoproteome analysis.</title>
        <authorList>
            <person name="Albuquerque C.P."/>
            <person name="Smolka M.B."/>
            <person name="Payne S.H."/>
            <person name="Bafna V."/>
            <person name="Eng J."/>
            <person name="Zhou H."/>
        </authorList>
    </citation>
    <scope>IDENTIFICATION BY MASS SPECTROMETRY [LARGE SCALE ANALYSIS]</scope>
</reference>
<reference key="10">
    <citation type="journal article" date="2009" name="Science">
        <title>Global analysis of Cdk1 substrate phosphorylation sites provides insights into evolution.</title>
        <authorList>
            <person name="Holt L.J."/>
            <person name="Tuch B.B."/>
            <person name="Villen J."/>
            <person name="Johnson A.D."/>
            <person name="Gygi S.P."/>
            <person name="Morgan D.O."/>
        </authorList>
    </citation>
    <scope>IDENTIFICATION BY MASS SPECTROMETRY [LARGE SCALE ANALYSIS]</scope>
</reference>
<reference key="11">
    <citation type="journal article" date="2004" name="EMBO J.">
        <title>Structural basis for recruitment of the ATPase activator Aha1 to the Hsp90 chaperone machinery.</title>
        <authorList>
            <person name="Meyer P."/>
        </authorList>
    </citation>
    <scope>X-RAY CRYSTALLOGRAPHY (2.15 ANGSTROMS) OF 1-156 IN COMPLEX WITH HSP82</scope>
    <scope>MUTAGENESIS OF ASP-53; ARG-59; LYS-60 AND LYS-62</scope>
</reference>
<reference key="12">
    <citation type="journal article" date="2004" name="EMBO J.">
        <authorList>
            <person name="Meyer P."/>
            <person name="Prodromou C."/>
            <person name="Liao C."/>
            <person name="Hu B."/>
            <person name="Mark Roe S."/>
            <person name="Vaughan C.K."/>
            <person name="Vlasic I."/>
            <person name="Panaretou B."/>
            <person name="Piper P.W."/>
            <person name="Pearl L.H."/>
        </authorList>
    </citation>
    <scope>ERRATUM OF PUBMED:14739935</scope>
</reference>
<protein>
    <recommendedName>
        <fullName>Hsp90 co-chaperone AHA1</fullName>
    </recommendedName>
    <alternativeName>
        <fullName>Activator of Hsp90 ATPase protein 1</fullName>
    </alternativeName>
</protein>
<gene>
    <name type="primary">AHA1</name>
    <name type="ordered locus">YDR214W</name>
    <name type="ORF">YD8142.16</name>
    <name type="ORF">YD8142B.06</name>
</gene>